<geneLocation type="plasmid">
    <name>pSB24.2</name>
</geneLocation>
<keyword id="KW-0046">Antibiotic resistance</keyword>
<keyword id="KW-0614">Plasmid</keyword>
<comment type="similarity">
    <text evidence="2">Belongs to the Gram-positive plasmids replication protein type 1 family.</text>
</comment>
<proteinExistence type="inferred from homology"/>
<organism>
    <name type="scientific">Streptomyces cyanogenus</name>
    <dbReference type="NCBI Taxonomy" id="80860"/>
    <lineage>
        <taxon>Bacteria</taxon>
        <taxon>Bacillati</taxon>
        <taxon>Actinomycetota</taxon>
        <taxon>Actinomycetes</taxon>
        <taxon>Kitasatosporales</taxon>
        <taxon>Streptomycetaceae</taxon>
        <taxon>Streptomyces</taxon>
    </lineage>
</organism>
<protein>
    <recommendedName>
        <fullName>Neomycin resistance protein</fullName>
    </recommendedName>
</protein>
<feature type="chain" id="PRO_0000068503" description="Neomycin resistance protein">
    <location>
        <begin position="1"/>
        <end position="437"/>
    </location>
</feature>
<feature type="region of interest" description="Disordered" evidence="1">
    <location>
        <begin position="161"/>
        <end position="285"/>
    </location>
</feature>
<feature type="region of interest" description="Disordered" evidence="1">
    <location>
        <begin position="305"/>
        <end position="338"/>
    </location>
</feature>
<feature type="compositionally biased region" description="Low complexity" evidence="1">
    <location>
        <begin position="203"/>
        <end position="229"/>
    </location>
</feature>
<feature type="compositionally biased region" description="Basic residues" evidence="1">
    <location>
        <begin position="324"/>
        <end position="338"/>
    </location>
</feature>
<feature type="sequence conflict" description="In Ref. 2; AAA98338." evidence="2" ref="2">
    <original>G</original>
    <variation>R</variation>
    <location>
        <position position="111"/>
    </location>
</feature>
<feature type="sequence conflict" description="In Ref. 2; AAA98338." evidence="2" ref="2">
    <original>A</original>
    <variation>P</variation>
    <location>
        <position position="220"/>
    </location>
</feature>
<feature type="sequence conflict" description="In Ref. 2; AAA98338." evidence="2" ref="2">
    <original>K</original>
    <variation>N</variation>
    <location>
        <position position="356"/>
    </location>
</feature>
<feature type="sequence conflict" description="In Ref. 2; AAA98338." evidence="2" ref="2">
    <original>R</original>
    <variation>G</variation>
    <location>
        <position position="412"/>
    </location>
</feature>
<accession>P14501</accession>
<evidence type="ECO:0000256" key="1">
    <source>
        <dbReference type="SAM" id="MobiDB-lite"/>
    </source>
</evidence>
<evidence type="ECO:0000305" key="2"/>
<sequence>MDPDAGVIFARTAAGAAVALGLLKCGRIWLCPVCSGQDPARPSEEITEAVVSWLQQGGWAYLVTFTARHTAADRLSDLMDALQGTRADAETGTKRRPGAYQRLITGAAWAGDKRRKSNQEGIRGRIGYIGMIRATEVTVGEGAGWHPHIHAIVLVGGRTEGQRGDKRITGTFTPSEDALTEWEDRWRRSGPATLARSTPGFRPPTGARSPGATAGARATASTSSSSVRSGRQRPGRVHRQDAGRQEPGPGAGTRRPQGRPPGQHDVLRTPSRIGDLMGGVPEEEAAGHGSLAWGLDRWAEYETAVSGAGHRVDPLPAPAPGPDRRRHRGRRHGRPVPDRRRRRFRDGVQIWDRAWKGLVGRSLDLAVVEAVEGREISMDALGELVQSAGQSRAFLRVLTPQEVTELYDELLRTLARRREQAAERRAAEAAEAEPTTR</sequence>
<reference key="1">
    <citation type="journal article" date="1985" name="Dokl. Biochem.">
        <title>Nucleotide sequence of DNA of the actinomycete plasmid pSB24.2.</title>
        <authorList>
            <person name="Bolotin A.P."/>
            <person name="Sorokin A.V."/>
            <person name="Aleksandrov N.N."/>
            <person name="Danilenko V.N."/>
            <person name="Kozlov Y.I."/>
        </authorList>
    </citation>
    <scope>NUCLEOTIDE SEQUENCE [GENOMIC DNA]</scope>
</reference>
<reference key="2">
    <citation type="journal article" date="1985" name="Dokl. Biochem.">
        <title>Nucleotide sequence of DNA of the actinomycete plasmid pSB24.2.</title>
        <authorList>
            <person name="Bolotin A.P."/>
            <person name="Sorokin A.V."/>
            <person name="Aleksandrov N.N."/>
            <person name="Danilenko V.N."/>
            <person name="Kozlov Y.I."/>
        </authorList>
    </citation>
    <scope>NUCLEOTIDE SEQUENCE [GENOMIC DNA]</scope>
</reference>
<dbReference type="EMBL" id="X03756">
    <property type="protein sequence ID" value="CAA27389.1"/>
    <property type="molecule type" value="Genomic_DNA"/>
</dbReference>
<dbReference type="EMBL" id="M32513">
    <property type="protein sequence ID" value="AAA98338.1"/>
    <property type="molecule type" value="Genomic_DNA"/>
</dbReference>
<dbReference type="GO" id="GO:0046677">
    <property type="term" value="P:response to antibiotic"/>
    <property type="evidence" value="ECO:0007669"/>
    <property type="project" value="UniProtKB-KW"/>
</dbReference>
<name>NEOR_STRCY</name>